<reference key="1">
    <citation type="journal article" date="2003" name="Appl. Microbiol. Biotechnol.">
        <title>The Corynebacterium glutamicum genome: features and impacts on biotechnological processes.</title>
        <authorList>
            <person name="Ikeda M."/>
            <person name="Nakagawa S."/>
        </authorList>
    </citation>
    <scope>NUCLEOTIDE SEQUENCE [LARGE SCALE GENOMIC DNA]</scope>
    <source>
        <strain>ATCC 13032 / DSM 20300 / JCM 1318 / BCRC 11384 / CCUG 27702 / LMG 3730 / NBRC 12168 / NCIMB 10025 / NRRL B-2784 / 534</strain>
    </source>
</reference>
<reference key="2">
    <citation type="journal article" date="2003" name="J. Biotechnol.">
        <title>The complete Corynebacterium glutamicum ATCC 13032 genome sequence and its impact on the production of L-aspartate-derived amino acids and vitamins.</title>
        <authorList>
            <person name="Kalinowski J."/>
            <person name="Bathe B."/>
            <person name="Bartels D."/>
            <person name="Bischoff N."/>
            <person name="Bott M."/>
            <person name="Burkovski A."/>
            <person name="Dusch N."/>
            <person name="Eggeling L."/>
            <person name="Eikmanns B.J."/>
            <person name="Gaigalat L."/>
            <person name="Goesmann A."/>
            <person name="Hartmann M."/>
            <person name="Huthmacher K."/>
            <person name="Kraemer R."/>
            <person name="Linke B."/>
            <person name="McHardy A.C."/>
            <person name="Meyer F."/>
            <person name="Moeckel B."/>
            <person name="Pfefferle W."/>
            <person name="Puehler A."/>
            <person name="Rey D.A."/>
            <person name="Rueckert C."/>
            <person name="Rupp O."/>
            <person name="Sahm H."/>
            <person name="Wendisch V.F."/>
            <person name="Wiegraebe I."/>
            <person name="Tauch A."/>
        </authorList>
    </citation>
    <scope>NUCLEOTIDE SEQUENCE [LARGE SCALE GENOMIC DNA]</scope>
    <source>
        <strain>ATCC 13032 / DSM 20300 / JCM 1318 / BCRC 11384 / CCUG 27702 / LMG 3730 / NBRC 12168 / NCIMB 10025 / NRRL B-2784 / 534</strain>
    </source>
</reference>
<evidence type="ECO:0000255" key="1">
    <source>
        <dbReference type="HAMAP-Rule" id="MF_01576"/>
    </source>
</evidence>
<keyword id="KW-0028">Amino-acid biosynthesis</keyword>
<keyword id="KW-0368">Histidine biosynthesis</keyword>
<keyword id="KW-0378">Hydrolase</keyword>
<keyword id="KW-0486">Methionine biosynthesis</keyword>
<keyword id="KW-0511">Multifunctional enzyme</keyword>
<keyword id="KW-0521">NADP</keyword>
<keyword id="KW-0554">One-carbon metabolism</keyword>
<keyword id="KW-0560">Oxidoreductase</keyword>
<keyword id="KW-0658">Purine biosynthesis</keyword>
<keyword id="KW-1185">Reference proteome</keyword>
<proteinExistence type="inferred from homology"/>
<accession>Q8NSM0</accession>
<accession>Q6M7B8</accession>
<sequence>MTAIKLDGNLYRGEIFADLEQRVAALKEKGIVPGLATVLVGDDPASHSYVKMKHRDCEQIGVNSIRKDLPADVTQEELFAVIDELNNDDSCTGYIVQLPLPKHLDENAVLERIDPAKDADGLHPVNLGKLVLNEPAPLPCTPNGSISLLRRFGVELDGAKVVVIGRGVTVGRPIGLMLTRRSENSTVTLCHTGTKDLAAETRAADVIIAAAGQPHMLTADMVKPGAAVLDVGVSRKDGKLLGDVHPDVWEVAGAVSPNPGGVGPLTRAFLVHNVVERAEKLAGL</sequence>
<protein>
    <recommendedName>
        <fullName evidence="1">Bifunctional protein FolD</fullName>
    </recommendedName>
    <domain>
        <recommendedName>
            <fullName evidence="1">Methylenetetrahydrofolate dehydrogenase</fullName>
            <ecNumber evidence="1">1.5.1.5</ecNumber>
        </recommendedName>
    </domain>
    <domain>
        <recommendedName>
            <fullName evidence="1">Methenyltetrahydrofolate cyclohydrolase</fullName>
            <ecNumber evidence="1">3.5.4.9</ecNumber>
        </recommendedName>
    </domain>
</protein>
<comment type="function">
    <text evidence="1">Catalyzes the oxidation of 5,10-methylenetetrahydrofolate to 5,10-methenyltetrahydrofolate and then the hydrolysis of 5,10-methenyltetrahydrofolate to 10-formyltetrahydrofolate.</text>
</comment>
<comment type="catalytic activity">
    <reaction evidence="1">
        <text>(6R)-5,10-methylene-5,6,7,8-tetrahydrofolate + NADP(+) = (6R)-5,10-methenyltetrahydrofolate + NADPH</text>
        <dbReference type="Rhea" id="RHEA:22812"/>
        <dbReference type="ChEBI" id="CHEBI:15636"/>
        <dbReference type="ChEBI" id="CHEBI:57455"/>
        <dbReference type="ChEBI" id="CHEBI:57783"/>
        <dbReference type="ChEBI" id="CHEBI:58349"/>
        <dbReference type="EC" id="1.5.1.5"/>
    </reaction>
</comment>
<comment type="catalytic activity">
    <reaction evidence="1">
        <text>(6R)-5,10-methenyltetrahydrofolate + H2O = (6R)-10-formyltetrahydrofolate + H(+)</text>
        <dbReference type="Rhea" id="RHEA:23700"/>
        <dbReference type="ChEBI" id="CHEBI:15377"/>
        <dbReference type="ChEBI" id="CHEBI:15378"/>
        <dbReference type="ChEBI" id="CHEBI:57455"/>
        <dbReference type="ChEBI" id="CHEBI:195366"/>
        <dbReference type="EC" id="3.5.4.9"/>
    </reaction>
</comment>
<comment type="pathway">
    <text evidence="1">One-carbon metabolism; tetrahydrofolate interconversion.</text>
</comment>
<comment type="subunit">
    <text evidence="1">Homodimer.</text>
</comment>
<comment type="similarity">
    <text evidence="1">Belongs to the tetrahydrofolate dehydrogenase/cyclohydrolase family.</text>
</comment>
<dbReference type="EC" id="1.5.1.5" evidence="1"/>
<dbReference type="EC" id="3.5.4.9" evidence="1"/>
<dbReference type="EMBL" id="BA000036">
    <property type="protein sequence ID" value="BAB98041.1"/>
    <property type="molecule type" value="Genomic_DNA"/>
</dbReference>
<dbReference type="EMBL" id="BX927149">
    <property type="protein sequence ID" value="CAF19354.1"/>
    <property type="molecule type" value="Genomic_DNA"/>
</dbReference>
<dbReference type="RefSeq" id="NP_599881.1">
    <property type="nucleotide sequence ID" value="NC_003450.3"/>
</dbReference>
<dbReference type="RefSeq" id="WP_003860764.1">
    <property type="nucleotide sequence ID" value="NC_006958.1"/>
</dbReference>
<dbReference type="SMR" id="Q8NSM0"/>
<dbReference type="STRING" id="196627.cg0750"/>
<dbReference type="KEGG" id="cgb:cg0750"/>
<dbReference type="KEGG" id="cgl:Cgl0648"/>
<dbReference type="PATRIC" id="fig|196627.13.peg.633"/>
<dbReference type="eggNOG" id="COG0190">
    <property type="taxonomic scope" value="Bacteria"/>
</dbReference>
<dbReference type="HOGENOM" id="CLU_034045_3_0_11"/>
<dbReference type="OrthoDB" id="9803580at2"/>
<dbReference type="BioCyc" id="CORYNE:G18NG-10210-MONOMER"/>
<dbReference type="UniPathway" id="UPA00193"/>
<dbReference type="Proteomes" id="UP000000582">
    <property type="component" value="Chromosome"/>
</dbReference>
<dbReference type="Proteomes" id="UP000001009">
    <property type="component" value="Chromosome"/>
</dbReference>
<dbReference type="GO" id="GO:0005829">
    <property type="term" value="C:cytosol"/>
    <property type="evidence" value="ECO:0007669"/>
    <property type="project" value="TreeGrafter"/>
</dbReference>
<dbReference type="GO" id="GO:0004477">
    <property type="term" value="F:methenyltetrahydrofolate cyclohydrolase activity"/>
    <property type="evidence" value="ECO:0007669"/>
    <property type="project" value="UniProtKB-UniRule"/>
</dbReference>
<dbReference type="GO" id="GO:0004488">
    <property type="term" value="F:methylenetetrahydrofolate dehydrogenase (NADP+) activity"/>
    <property type="evidence" value="ECO:0007669"/>
    <property type="project" value="UniProtKB-UniRule"/>
</dbReference>
<dbReference type="GO" id="GO:0000105">
    <property type="term" value="P:L-histidine biosynthetic process"/>
    <property type="evidence" value="ECO:0007669"/>
    <property type="project" value="UniProtKB-KW"/>
</dbReference>
<dbReference type="GO" id="GO:0009086">
    <property type="term" value="P:methionine biosynthetic process"/>
    <property type="evidence" value="ECO:0007669"/>
    <property type="project" value="UniProtKB-KW"/>
</dbReference>
<dbReference type="GO" id="GO:0006164">
    <property type="term" value="P:purine nucleotide biosynthetic process"/>
    <property type="evidence" value="ECO:0007669"/>
    <property type="project" value="UniProtKB-KW"/>
</dbReference>
<dbReference type="GO" id="GO:0035999">
    <property type="term" value="P:tetrahydrofolate interconversion"/>
    <property type="evidence" value="ECO:0007669"/>
    <property type="project" value="UniProtKB-UniRule"/>
</dbReference>
<dbReference type="CDD" id="cd01080">
    <property type="entry name" value="NAD_bind_m-THF_DH_Cyclohyd"/>
    <property type="match status" value="1"/>
</dbReference>
<dbReference type="FunFam" id="3.40.50.720:FF:000094">
    <property type="entry name" value="Bifunctional protein FolD"/>
    <property type="match status" value="1"/>
</dbReference>
<dbReference type="FunFam" id="3.40.50.10860:FF:000005">
    <property type="entry name" value="C-1-tetrahydrofolate synthase, cytoplasmic, putative"/>
    <property type="match status" value="1"/>
</dbReference>
<dbReference type="Gene3D" id="3.40.50.10860">
    <property type="entry name" value="Leucine Dehydrogenase, chain A, domain 1"/>
    <property type="match status" value="1"/>
</dbReference>
<dbReference type="Gene3D" id="3.40.50.720">
    <property type="entry name" value="NAD(P)-binding Rossmann-like Domain"/>
    <property type="match status" value="1"/>
</dbReference>
<dbReference type="HAMAP" id="MF_01576">
    <property type="entry name" value="THF_DHG_CYH"/>
    <property type="match status" value="1"/>
</dbReference>
<dbReference type="InterPro" id="IPR046346">
    <property type="entry name" value="Aminoacid_DH-like_N_sf"/>
</dbReference>
<dbReference type="InterPro" id="IPR036291">
    <property type="entry name" value="NAD(P)-bd_dom_sf"/>
</dbReference>
<dbReference type="InterPro" id="IPR000672">
    <property type="entry name" value="THF_DH/CycHdrlase"/>
</dbReference>
<dbReference type="InterPro" id="IPR020630">
    <property type="entry name" value="THF_DH/CycHdrlase_cat_dom"/>
</dbReference>
<dbReference type="InterPro" id="IPR020631">
    <property type="entry name" value="THF_DH/CycHdrlase_NAD-bd_dom"/>
</dbReference>
<dbReference type="NCBIfam" id="NF010789">
    <property type="entry name" value="PRK14193.1"/>
    <property type="match status" value="1"/>
</dbReference>
<dbReference type="PANTHER" id="PTHR48099:SF5">
    <property type="entry name" value="C-1-TETRAHYDROFOLATE SYNTHASE, CYTOPLASMIC"/>
    <property type="match status" value="1"/>
</dbReference>
<dbReference type="PANTHER" id="PTHR48099">
    <property type="entry name" value="C-1-TETRAHYDROFOLATE SYNTHASE, CYTOPLASMIC-RELATED"/>
    <property type="match status" value="1"/>
</dbReference>
<dbReference type="Pfam" id="PF00763">
    <property type="entry name" value="THF_DHG_CYH"/>
    <property type="match status" value="1"/>
</dbReference>
<dbReference type="Pfam" id="PF02882">
    <property type="entry name" value="THF_DHG_CYH_C"/>
    <property type="match status" value="1"/>
</dbReference>
<dbReference type="PRINTS" id="PR00085">
    <property type="entry name" value="THFDHDRGNASE"/>
</dbReference>
<dbReference type="SUPFAM" id="SSF53223">
    <property type="entry name" value="Aminoacid dehydrogenase-like, N-terminal domain"/>
    <property type="match status" value="1"/>
</dbReference>
<dbReference type="SUPFAM" id="SSF51735">
    <property type="entry name" value="NAD(P)-binding Rossmann-fold domains"/>
    <property type="match status" value="1"/>
</dbReference>
<organism>
    <name type="scientific">Corynebacterium glutamicum (strain ATCC 13032 / DSM 20300 / JCM 1318 / BCRC 11384 / CCUG 27702 / LMG 3730 / NBRC 12168 / NCIMB 10025 / NRRL B-2784 / 534)</name>
    <dbReference type="NCBI Taxonomy" id="196627"/>
    <lineage>
        <taxon>Bacteria</taxon>
        <taxon>Bacillati</taxon>
        <taxon>Actinomycetota</taxon>
        <taxon>Actinomycetes</taxon>
        <taxon>Mycobacteriales</taxon>
        <taxon>Corynebacteriaceae</taxon>
        <taxon>Corynebacterium</taxon>
    </lineage>
</organism>
<name>FOLD_CORGL</name>
<feature type="chain" id="PRO_0000268325" description="Bifunctional protein FolD">
    <location>
        <begin position="1"/>
        <end position="284"/>
    </location>
</feature>
<feature type="binding site" evidence="1">
    <location>
        <begin position="165"/>
        <end position="167"/>
    </location>
    <ligand>
        <name>NADP(+)</name>
        <dbReference type="ChEBI" id="CHEBI:58349"/>
    </ligand>
</feature>
<feature type="binding site" evidence="1">
    <location>
        <position position="192"/>
    </location>
    <ligand>
        <name>NADP(+)</name>
        <dbReference type="ChEBI" id="CHEBI:58349"/>
    </ligand>
</feature>
<feature type="binding site" evidence="1">
    <location>
        <position position="233"/>
    </location>
    <ligand>
        <name>NADP(+)</name>
        <dbReference type="ChEBI" id="CHEBI:58349"/>
    </ligand>
</feature>
<gene>
    <name evidence="1" type="primary">folD</name>
    <name type="ordered locus">Cgl0648</name>
    <name type="ordered locus">cg0750</name>
</gene>